<gene>
    <name type="primary">ACBD3</name>
    <name type="synonym">GCP60</name>
    <name type="synonym">GOCAP1</name>
    <name type="synonym">GOLPH1</name>
</gene>
<accession>Q9H3P7</accession>
<accession>B2RB29</accession>
<accession>Q5VTJ0</accession>
<accession>Q6P9F1</accession>
<accession>Q8IZC5</accession>
<accession>Q8N4D6</accession>
<accession>Q9H6U3</accession>
<protein>
    <recommendedName>
        <fullName>Golgi resident protein GCP60</fullName>
    </recommendedName>
    <alternativeName>
        <fullName>Acyl-CoA-binding domain-containing protein 3</fullName>
    </alternativeName>
    <alternativeName>
        <fullName>Golgi complex-associated protein 1</fullName>
        <shortName>GOCAP1</shortName>
    </alternativeName>
    <alternativeName>
        <fullName>Golgi phosphoprotein 1</fullName>
        <shortName>GOLPH1</shortName>
    </alternativeName>
    <alternativeName>
        <fullName>PBR- and PKA-associated protein 7</fullName>
    </alternativeName>
    <alternativeName>
        <fullName>Peripheral benzodiazepine receptor-associated protein PAP7</fullName>
    </alternativeName>
    <component>
        <recommendedName>
            <fullName>Golgi resident protein GCP60, N-terminally processed</fullName>
        </recommendedName>
    </component>
</protein>
<evidence type="ECO:0000250" key="1"/>
<evidence type="ECO:0000250" key="2">
    <source>
        <dbReference type="UniProtKB" id="Q8BMP6"/>
    </source>
</evidence>
<evidence type="ECO:0000255" key="3"/>
<evidence type="ECO:0000255" key="4">
    <source>
        <dbReference type="PROSITE-ProRule" id="PRU00096"/>
    </source>
</evidence>
<evidence type="ECO:0000255" key="5">
    <source>
        <dbReference type="PROSITE-ProRule" id="PRU00573"/>
    </source>
</evidence>
<evidence type="ECO:0000256" key="6">
    <source>
        <dbReference type="SAM" id="MobiDB-lite"/>
    </source>
</evidence>
<evidence type="ECO:0000269" key="7">
    <source>
    </source>
</evidence>
<evidence type="ECO:0000269" key="8">
    <source>
    </source>
</evidence>
<evidence type="ECO:0000269" key="9">
    <source>
    </source>
</evidence>
<evidence type="ECO:0000269" key="10">
    <source>
    </source>
</evidence>
<evidence type="ECO:0000269" key="11">
    <source>
    </source>
</evidence>
<evidence type="ECO:0000269" key="12">
    <source>
    </source>
</evidence>
<evidence type="ECO:0000269" key="13">
    <source>
    </source>
</evidence>
<evidence type="ECO:0000269" key="14">
    <source>
    </source>
</evidence>
<evidence type="ECO:0000269" key="15">
    <source>
    </source>
</evidence>
<evidence type="ECO:0000269" key="16">
    <source>
    </source>
</evidence>
<evidence type="ECO:0000269" key="17">
    <source>
    </source>
</evidence>
<evidence type="ECO:0000269" key="18">
    <source ref="2"/>
</evidence>
<evidence type="ECO:0000305" key="19"/>
<evidence type="ECO:0000305" key="20">
    <source>
    </source>
</evidence>
<evidence type="ECO:0000305" key="21">
    <source>
    </source>
</evidence>
<evidence type="ECO:0007744" key="22">
    <source>
        <dbReference type="PDB" id="2N72"/>
    </source>
</evidence>
<evidence type="ECO:0007744" key="23">
    <source>
        <dbReference type="PDB" id="2N73"/>
    </source>
</evidence>
<evidence type="ECO:0007744" key="24">
    <source>
        <dbReference type="PDB" id="5LZ1"/>
    </source>
</evidence>
<evidence type="ECO:0007744" key="25">
    <source>
        <dbReference type="PDB" id="5LZ3"/>
    </source>
</evidence>
<evidence type="ECO:0007744" key="26">
    <source>
        <dbReference type="PDB" id="5LZ6"/>
    </source>
</evidence>
<evidence type="ECO:0007744" key="27">
    <source>
        <dbReference type="PDB" id="5TDQ"/>
    </source>
</evidence>
<evidence type="ECO:0007744" key="28">
    <source>
        <dbReference type="PDB" id="6HLN"/>
    </source>
</evidence>
<evidence type="ECO:0007744" key="29">
    <source>
        <dbReference type="PDB" id="6HLT"/>
    </source>
</evidence>
<evidence type="ECO:0007744" key="30">
    <source>
        <dbReference type="PDB" id="6HLV"/>
    </source>
</evidence>
<evidence type="ECO:0007744" key="31">
    <source>
        <dbReference type="PDB" id="6HLW"/>
    </source>
</evidence>
<evidence type="ECO:0007744" key="32">
    <source>
        <dbReference type="PDB" id="6HM8"/>
    </source>
</evidence>
<evidence type="ECO:0007744" key="33">
    <source>
        <dbReference type="PDB" id="6HMV"/>
    </source>
</evidence>
<evidence type="ECO:0007744" key="34">
    <source>
    </source>
</evidence>
<evidence type="ECO:0007744" key="35">
    <source>
    </source>
</evidence>
<evidence type="ECO:0007744" key="36">
    <source>
    </source>
</evidence>
<evidence type="ECO:0007744" key="37">
    <source>
    </source>
</evidence>
<evidence type="ECO:0007744" key="38">
    <source>
    </source>
</evidence>
<evidence type="ECO:0007829" key="39">
    <source>
        <dbReference type="PDB" id="2N72"/>
    </source>
</evidence>
<evidence type="ECO:0007829" key="40">
    <source>
        <dbReference type="PDB" id="5LZ1"/>
    </source>
</evidence>
<proteinExistence type="evidence at protein level"/>
<name>GCP60_HUMAN</name>
<comment type="function">
    <text evidence="2 7 13">Involved in the maintenance of Golgi structure by interacting with giantin, affecting protein transport between the endoplasmic reticulum and Golgi (PubMed:11590181). Involved in hormone-induced steroid biosynthesis in testicular Leydig cells (By similarity). Recruits PI4KB to the Golgi apparatus membrane; enhances the enzyme activity of PI4KB activity via its membrane recruitment thereby increasing the local concentration of the substrate in the vicinity of the kinase (PubMed:27009356).</text>
</comment>
<comment type="function">
    <text evidence="10 11 14">(Microbial infection) Plays an essential role in Aichi virus RNA replication by recruiting PI4KB at the viral replication sites.</text>
</comment>
<comment type="subunit">
    <text evidence="2 7 10 11 12 13 14">Homodimer (PubMed:23572552). Interacts with the C-terminal cytoplasmic domain of giantin/GOLGB1 (PubMed:11590181). Interacts with PBR and PKA regulatory subunit RI-alpha. Does not interact with PKA regulatory subunit RI-beta nor PKA regulatory subunit RII-alpha (By similarity). Interacts (via Q domain) with PI4KB (via N-terminus) (PubMed:22124328, PubMed:22258260, PubMed:23572552, PubMed:27009356, PubMed:27989622). Interacts (via Q domain) with TBC1D22A and TBC1D22B; interactions with PI4KB and with TBC1D22A and TBC1D22B are mutually exclusive (PubMed:22124328, PubMed:23572552, PubMed:27009356, PubMed:27989622). Interacts with C10ORF76 and RAB11B (PubMed:23572552).</text>
</comment>
<comment type="subunit">
    <text evidence="10 11 12 14 16 17 20">(Microbial infection) Interacts (via GOLD domain) with 3A proteins from various picornaviruses, including poliovirus, enterovirus A71, enterovirus D68, hepatitis A virus, human parechovirus 1, poliovirus, Human rhinovirus-14 (Hrv-14), coysackievirus B2, coysackievirus B3, coysackievirus B5, Aichi virus and human klassevirus (PubMed:22258260, PubMed:23572552, PubMed:31381608). Interacts (via GOLD domain) with Aichi virus protein 3A; this interaction allows the formation of a 3A/ACBD3/PI4KB complex in order to synthesize PI4P at the viral RNA replication sites (Probable) (PubMed:22124328, PubMed:23572552, PubMed:27989622, PubMed:30755512). Interacts with Aichi virus protein 2B (PubMed:22124328). Interacts with Aichi virus protein 2C (PubMed:22124328).</text>
</comment>
<comment type="interaction">
    <interactant intactId="EBI-1791792">
        <id>Q9H3P7</id>
    </interactant>
    <interactant intactId="EBI-21229583">
        <id>A0A0B4J1S8</id>
        <label>PI4KB</label>
    </interactant>
    <organismsDiffer>false</organismsDiffer>
    <experiments>6</experiments>
</comment>
<comment type="interaction">
    <interactant intactId="EBI-1791792">
        <id>Q9H3P7</id>
    </interactant>
    <interactant intactId="EBI-1053214">
        <id>Q9UBF8</id>
        <label>PI4KB</label>
    </interactant>
    <organismsDiffer>false</organismsDiffer>
    <experiments>4</experiments>
</comment>
<comment type="interaction">
    <interactant intactId="EBI-1791792">
        <id>Q9H3P7</id>
    </interactant>
    <interactant intactId="EBI-2821276">
        <id>Q8WUA7</id>
        <label>TBC1D22A</label>
    </interactant>
    <organismsDiffer>false</organismsDiffer>
    <experiments>15</experiments>
</comment>
<comment type="interaction">
    <interactant intactId="EBI-1791792">
        <id>Q9H3P7</id>
    </interactant>
    <interactant intactId="EBI-8787464">
        <id>Q9NU19</id>
        <label>TBC1D22B</label>
    </interactant>
    <organismsDiffer>false</organismsDiffer>
    <experiments>7</experiments>
</comment>
<comment type="interaction">
    <interactant intactId="EBI-1791792">
        <id>Q9H3P7</id>
    </interactant>
    <interactant intactId="EBI-7970002">
        <id>Q8BHN0</id>
        <label>Ppm1l</label>
    </interactant>
    <organismsDiffer>true</organismsDiffer>
    <experiments>3</experiments>
</comment>
<comment type="interaction">
    <interactant intactId="EBI-1791792">
        <id>Q9H3P7</id>
    </interactant>
    <interactant intactId="EBI-7587528">
        <id>O91464</id>
    </interactant>
    <organismsDiffer>true</organismsDiffer>
    <experiments>13</experiments>
</comment>
<comment type="interaction">
    <interactant intactId="EBI-1791792">
        <id>Q9H3P7</id>
    </interactant>
    <interactant intactId="EBI-22117245">
        <id>PRO_0000448012</id>
        <dbReference type="UniProtKB" id="O91464"/>
    </interactant>
    <organismsDiffer>true</organismsDiffer>
    <experiments>4</experiments>
</comment>
<comment type="interaction">
    <interactant intactId="EBI-1791792">
        <id>Q9H3P7</id>
    </interactant>
    <interactant intactId="EBI-22117252">
        <id>PRO_0000448014</id>
        <dbReference type="UniProtKB" id="O91464"/>
    </interactant>
    <organismsDiffer>true</organismsDiffer>
    <experiments>5</experiments>
</comment>
<comment type="interaction">
    <interactant intactId="EBI-1791792">
        <id>Q9H3P7</id>
    </interactant>
    <interactant intactId="EBI-22116975">
        <id>PRO_0000448015</id>
        <dbReference type="UniProtKB" id="O91464"/>
    </interactant>
    <organismsDiffer>true</organismsDiffer>
    <experiments>5</experiments>
</comment>
<comment type="interaction">
    <interactant intactId="EBI-1791792">
        <id>Q9H3P7</id>
    </interactant>
    <interactant intactId="EBI-21242141">
        <id>PRO_0000424692</id>
        <dbReference type="UniProtKB" id="P03300"/>
    </interactant>
    <organismsDiffer>true</organismsDiffer>
    <experiments>12</experiments>
</comment>
<comment type="interaction">
    <interactant intactId="EBI-1791792">
        <id>Q9H3P7</id>
    </interactant>
    <interactant intactId="EBI-21242149">
        <id>PRO_0000039600</id>
        <dbReference type="UniProtKB" id="Q66282"/>
    </interactant>
    <organismsDiffer>true</organismsDiffer>
    <experiments>2</experiments>
</comment>
<comment type="subcellular location">
    <subcellularLocation>
        <location evidence="10 13 16 17">Golgi apparatus membrane</location>
        <topology evidence="21">Peripheral membrane protein</topology>
        <orientation evidence="1">Cytoplasmic side</orientation>
    </subcellularLocation>
    <subcellularLocation>
        <location evidence="1">Mitochondrion</location>
    </subcellularLocation>
    <text evidence="1">Also mitochondrial (via its interaction with PBR).</text>
</comment>
<comment type="tissue specificity">
    <text evidence="7">Ubiquitous, with highest expression in testis and ovary.</text>
</comment>
<comment type="domain">
    <text evidence="12">The central Gln-rich region (Q domain) is involved in binding to PI4KB, TBC1D22A and TBC1D22B (PubMed:23572552). The C-terminal GOLD domain is essential for giantin binding. The GOLD domain is also involved in homodimerization (PubMed:23572552).</text>
</comment>
<comment type="domain">
    <text evidence="12 14">(Microbial infection) The GOLD domain is involved in binding to the picornaviral protein 3A.</text>
</comment>
<organism>
    <name type="scientific">Homo sapiens</name>
    <name type="common">Human</name>
    <dbReference type="NCBI Taxonomy" id="9606"/>
    <lineage>
        <taxon>Eukaryota</taxon>
        <taxon>Metazoa</taxon>
        <taxon>Chordata</taxon>
        <taxon>Craniata</taxon>
        <taxon>Vertebrata</taxon>
        <taxon>Euteleostomi</taxon>
        <taxon>Mammalia</taxon>
        <taxon>Eutheria</taxon>
        <taxon>Euarchontoglires</taxon>
        <taxon>Primates</taxon>
        <taxon>Haplorrhini</taxon>
        <taxon>Catarrhini</taxon>
        <taxon>Hominidae</taxon>
        <taxon>Homo</taxon>
    </lineage>
</organism>
<reference key="1">
    <citation type="journal article" date="2001" name="J. Biol. Chem.">
        <title>Identification and characterization of a novel Golgi protein, GCP60, that interacts with the integral membrane protein giantin.</title>
        <authorList>
            <person name="Sohda M."/>
            <person name="Misumi Y."/>
            <person name="Yamamoto A."/>
            <person name="Yano A."/>
            <person name="Nakamura N."/>
            <person name="Ikehara Y."/>
        </authorList>
    </citation>
    <scope>NUCLEOTIDE SEQUENCE [MRNA]</scope>
    <scope>FUNCTION</scope>
    <scope>SUBCELLULAR LOCATION</scope>
    <scope>INTERACTION WITH GOLGB1</scope>
    <scope>TISSUE SPECIFICITY</scope>
    <source>
        <tissue>Cervix carcinoma</tissue>
    </source>
</reference>
<reference key="2">
    <citation type="submission" date="2002-09" db="EMBL/GenBank/DDBJ databases">
        <authorList>
            <person name="Liu J."/>
            <person name="Tobin D."/>
            <person name="Tasken K."/>
            <person name="Papadopoulos V."/>
        </authorList>
    </citation>
    <scope>NUCLEOTIDE SEQUENCE [MRNA]</scope>
    <scope>VARIANT ASP-187</scope>
    <source>
        <tissue>Placenta</tissue>
    </source>
</reference>
<reference key="3">
    <citation type="journal article" date="2004" name="Nat. Genet.">
        <title>Complete sequencing and characterization of 21,243 full-length human cDNAs.</title>
        <authorList>
            <person name="Ota T."/>
            <person name="Suzuki Y."/>
            <person name="Nishikawa T."/>
            <person name="Otsuki T."/>
            <person name="Sugiyama T."/>
            <person name="Irie R."/>
            <person name="Wakamatsu A."/>
            <person name="Hayashi K."/>
            <person name="Sato H."/>
            <person name="Nagai K."/>
            <person name="Kimura K."/>
            <person name="Makita H."/>
            <person name="Sekine M."/>
            <person name="Obayashi M."/>
            <person name="Nishi T."/>
            <person name="Shibahara T."/>
            <person name="Tanaka T."/>
            <person name="Ishii S."/>
            <person name="Yamamoto J."/>
            <person name="Saito K."/>
            <person name="Kawai Y."/>
            <person name="Isono Y."/>
            <person name="Nakamura Y."/>
            <person name="Nagahari K."/>
            <person name="Murakami K."/>
            <person name="Yasuda T."/>
            <person name="Iwayanagi T."/>
            <person name="Wagatsuma M."/>
            <person name="Shiratori A."/>
            <person name="Sudo H."/>
            <person name="Hosoiri T."/>
            <person name="Kaku Y."/>
            <person name="Kodaira H."/>
            <person name="Kondo H."/>
            <person name="Sugawara M."/>
            <person name="Takahashi M."/>
            <person name="Kanda K."/>
            <person name="Yokoi T."/>
            <person name="Furuya T."/>
            <person name="Kikkawa E."/>
            <person name="Omura Y."/>
            <person name="Abe K."/>
            <person name="Kamihara K."/>
            <person name="Katsuta N."/>
            <person name="Sato K."/>
            <person name="Tanikawa M."/>
            <person name="Yamazaki M."/>
            <person name="Ninomiya K."/>
            <person name="Ishibashi T."/>
            <person name="Yamashita H."/>
            <person name="Murakawa K."/>
            <person name="Fujimori K."/>
            <person name="Tanai H."/>
            <person name="Kimata M."/>
            <person name="Watanabe M."/>
            <person name="Hiraoka S."/>
            <person name="Chiba Y."/>
            <person name="Ishida S."/>
            <person name="Ono Y."/>
            <person name="Takiguchi S."/>
            <person name="Watanabe S."/>
            <person name="Yosida M."/>
            <person name="Hotuta T."/>
            <person name="Kusano J."/>
            <person name="Kanehori K."/>
            <person name="Takahashi-Fujii A."/>
            <person name="Hara H."/>
            <person name="Tanase T.-O."/>
            <person name="Nomura Y."/>
            <person name="Togiya S."/>
            <person name="Komai F."/>
            <person name="Hara R."/>
            <person name="Takeuchi K."/>
            <person name="Arita M."/>
            <person name="Imose N."/>
            <person name="Musashino K."/>
            <person name="Yuuki H."/>
            <person name="Oshima A."/>
            <person name="Sasaki N."/>
            <person name="Aotsuka S."/>
            <person name="Yoshikawa Y."/>
            <person name="Matsunawa H."/>
            <person name="Ichihara T."/>
            <person name="Shiohata N."/>
            <person name="Sano S."/>
            <person name="Moriya S."/>
            <person name="Momiyama H."/>
            <person name="Satoh N."/>
            <person name="Takami S."/>
            <person name="Terashima Y."/>
            <person name="Suzuki O."/>
            <person name="Nakagawa S."/>
            <person name="Senoh A."/>
            <person name="Mizoguchi H."/>
            <person name="Goto Y."/>
            <person name="Shimizu F."/>
            <person name="Wakebe H."/>
            <person name="Hishigaki H."/>
            <person name="Watanabe T."/>
            <person name="Sugiyama A."/>
            <person name="Takemoto M."/>
            <person name="Kawakami B."/>
            <person name="Yamazaki M."/>
            <person name="Watanabe K."/>
            <person name="Kumagai A."/>
            <person name="Itakura S."/>
            <person name="Fukuzumi Y."/>
            <person name="Fujimori Y."/>
            <person name="Komiyama M."/>
            <person name="Tashiro H."/>
            <person name="Tanigami A."/>
            <person name="Fujiwara T."/>
            <person name="Ono T."/>
            <person name="Yamada K."/>
            <person name="Fujii Y."/>
            <person name="Ozaki K."/>
            <person name="Hirao M."/>
            <person name="Ohmori Y."/>
            <person name="Kawabata A."/>
            <person name="Hikiji T."/>
            <person name="Kobatake N."/>
            <person name="Inagaki H."/>
            <person name="Ikema Y."/>
            <person name="Okamoto S."/>
            <person name="Okitani R."/>
            <person name="Kawakami T."/>
            <person name="Noguchi S."/>
            <person name="Itoh T."/>
            <person name="Shigeta K."/>
            <person name="Senba T."/>
            <person name="Matsumura K."/>
            <person name="Nakajima Y."/>
            <person name="Mizuno T."/>
            <person name="Morinaga M."/>
            <person name="Sasaki M."/>
            <person name="Togashi T."/>
            <person name="Oyama M."/>
            <person name="Hata H."/>
            <person name="Watanabe M."/>
            <person name="Komatsu T."/>
            <person name="Mizushima-Sugano J."/>
            <person name="Satoh T."/>
            <person name="Shirai Y."/>
            <person name="Takahashi Y."/>
            <person name="Nakagawa K."/>
            <person name="Okumura K."/>
            <person name="Nagase T."/>
            <person name="Nomura N."/>
            <person name="Kikuchi H."/>
            <person name="Masuho Y."/>
            <person name="Yamashita R."/>
            <person name="Nakai K."/>
            <person name="Yada T."/>
            <person name="Nakamura Y."/>
            <person name="Ohara O."/>
            <person name="Isogai T."/>
            <person name="Sugano S."/>
        </authorList>
    </citation>
    <scope>NUCLEOTIDE SEQUENCE [LARGE SCALE MRNA]</scope>
    <scope>VARIANT ASP-187</scope>
    <source>
        <tissue>Trachea</tissue>
    </source>
</reference>
<reference key="4">
    <citation type="journal article" date="2006" name="Nature">
        <title>The DNA sequence and biological annotation of human chromosome 1.</title>
        <authorList>
            <person name="Gregory S.G."/>
            <person name="Barlow K.F."/>
            <person name="McLay K.E."/>
            <person name="Kaul R."/>
            <person name="Swarbreck D."/>
            <person name="Dunham A."/>
            <person name="Scott C.E."/>
            <person name="Howe K.L."/>
            <person name="Woodfine K."/>
            <person name="Spencer C.C.A."/>
            <person name="Jones M.C."/>
            <person name="Gillson C."/>
            <person name="Searle S."/>
            <person name="Zhou Y."/>
            <person name="Kokocinski F."/>
            <person name="McDonald L."/>
            <person name="Evans R."/>
            <person name="Phillips K."/>
            <person name="Atkinson A."/>
            <person name="Cooper R."/>
            <person name="Jones C."/>
            <person name="Hall R.E."/>
            <person name="Andrews T.D."/>
            <person name="Lloyd C."/>
            <person name="Ainscough R."/>
            <person name="Almeida J.P."/>
            <person name="Ambrose K.D."/>
            <person name="Anderson F."/>
            <person name="Andrew R.W."/>
            <person name="Ashwell R.I.S."/>
            <person name="Aubin K."/>
            <person name="Babbage A.K."/>
            <person name="Bagguley C.L."/>
            <person name="Bailey J."/>
            <person name="Beasley H."/>
            <person name="Bethel G."/>
            <person name="Bird C.P."/>
            <person name="Bray-Allen S."/>
            <person name="Brown J.Y."/>
            <person name="Brown A.J."/>
            <person name="Buckley D."/>
            <person name="Burton J."/>
            <person name="Bye J."/>
            <person name="Carder C."/>
            <person name="Chapman J.C."/>
            <person name="Clark S.Y."/>
            <person name="Clarke G."/>
            <person name="Clee C."/>
            <person name="Cobley V."/>
            <person name="Collier R.E."/>
            <person name="Corby N."/>
            <person name="Coville G.J."/>
            <person name="Davies J."/>
            <person name="Deadman R."/>
            <person name="Dunn M."/>
            <person name="Earthrowl M."/>
            <person name="Ellington A.G."/>
            <person name="Errington H."/>
            <person name="Frankish A."/>
            <person name="Frankland J."/>
            <person name="French L."/>
            <person name="Garner P."/>
            <person name="Garnett J."/>
            <person name="Gay L."/>
            <person name="Ghori M.R.J."/>
            <person name="Gibson R."/>
            <person name="Gilby L.M."/>
            <person name="Gillett W."/>
            <person name="Glithero R.J."/>
            <person name="Grafham D.V."/>
            <person name="Griffiths C."/>
            <person name="Griffiths-Jones S."/>
            <person name="Grocock R."/>
            <person name="Hammond S."/>
            <person name="Harrison E.S.I."/>
            <person name="Hart E."/>
            <person name="Haugen E."/>
            <person name="Heath P.D."/>
            <person name="Holmes S."/>
            <person name="Holt K."/>
            <person name="Howden P.J."/>
            <person name="Hunt A.R."/>
            <person name="Hunt S.E."/>
            <person name="Hunter G."/>
            <person name="Isherwood J."/>
            <person name="James R."/>
            <person name="Johnson C."/>
            <person name="Johnson D."/>
            <person name="Joy A."/>
            <person name="Kay M."/>
            <person name="Kershaw J.K."/>
            <person name="Kibukawa M."/>
            <person name="Kimberley A.M."/>
            <person name="King A."/>
            <person name="Knights A.J."/>
            <person name="Lad H."/>
            <person name="Laird G."/>
            <person name="Lawlor S."/>
            <person name="Leongamornlert D.A."/>
            <person name="Lloyd D.M."/>
            <person name="Loveland J."/>
            <person name="Lovell J."/>
            <person name="Lush M.J."/>
            <person name="Lyne R."/>
            <person name="Martin S."/>
            <person name="Mashreghi-Mohammadi M."/>
            <person name="Matthews L."/>
            <person name="Matthews N.S.W."/>
            <person name="McLaren S."/>
            <person name="Milne S."/>
            <person name="Mistry S."/>
            <person name="Moore M.J.F."/>
            <person name="Nickerson T."/>
            <person name="O'Dell C.N."/>
            <person name="Oliver K."/>
            <person name="Palmeiri A."/>
            <person name="Palmer S.A."/>
            <person name="Parker A."/>
            <person name="Patel D."/>
            <person name="Pearce A.V."/>
            <person name="Peck A.I."/>
            <person name="Pelan S."/>
            <person name="Phelps K."/>
            <person name="Phillimore B.J."/>
            <person name="Plumb R."/>
            <person name="Rajan J."/>
            <person name="Raymond C."/>
            <person name="Rouse G."/>
            <person name="Saenphimmachak C."/>
            <person name="Sehra H.K."/>
            <person name="Sheridan E."/>
            <person name="Shownkeen R."/>
            <person name="Sims S."/>
            <person name="Skuce C.D."/>
            <person name="Smith M."/>
            <person name="Steward C."/>
            <person name="Subramanian S."/>
            <person name="Sycamore N."/>
            <person name="Tracey A."/>
            <person name="Tromans A."/>
            <person name="Van Helmond Z."/>
            <person name="Wall M."/>
            <person name="Wallis J.M."/>
            <person name="White S."/>
            <person name="Whitehead S.L."/>
            <person name="Wilkinson J.E."/>
            <person name="Willey D.L."/>
            <person name="Williams H."/>
            <person name="Wilming L."/>
            <person name="Wray P.W."/>
            <person name="Wu Z."/>
            <person name="Coulson A."/>
            <person name="Vaudin M."/>
            <person name="Sulston J.E."/>
            <person name="Durbin R.M."/>
            <person name="Hubbard T."/>
            <person name="Wooster R."/>
            <person name="Dunham I."/>
            <person name="Carter N.P."/>
            <person name="McVean G."/>
            <person name="Ross M.T."/>
            <person name="Harrow J."/>
            <person name="Olson M.V."/>
            <person name="Beck S."/>
            <person name="Rogers J."/>
            <person name="Bentley D.R."/>
        </authorList>
    </citation>
    <scope>NUCLEOTIDE SEQUENCE [LARGE SCALE GENOMIC DNA]</scope>
</reference>
<reference key="5">
    <citation type="submission" date="2005-07" db="EMBL/GenBank/DDBJ databases">
        <authorList>
            <person name="Mural R.J."/>
            <person name="Istrail S."/>
            <person name="Sutton G.G."/>
            <person name="Florea L."/>
            <person name="Halpern A.L."/>
            <person name="Mobarry C.M."/>
            <person name="Lippert R."/>
            <person name="Walenz B."/>
            <person name="Shatkay H."/>
            <person name="Dew I."/>
            <person name="Miller J.R."/>
            <person name="Flanigan M.J."/>
            <person name="Edwards N.J."/>
            <person name="Bolanos R."/>
            <person name="Fasulo D."/>
            <person name="Halldorsson B.V."/>
            <person name="Hannenhalli S."/>
            <person name="Turner R."/>
            <person name="Yooseph S."/>
            <person name="Lu F."/>
            <person name="Nusskern D.R."/>
            <person name="Shue B.C."/>
            <person name="Zheng X.H."/>
            <person name="Zhong F."/>
            <person name="Delcher A.L."/>
            <person name="Huson D.H."/>
            <person name="Kravitz S.A."/>
            <person name="Mouchard L."/>
            <person name="Reinert K."/>
            <person name="Remington K.A."/>
            <person name="Clark A.G."/>
            <person name="Waterman M.S."/>
            <person name="Eichler E.E."/>
            <person name="Adams M.D."/>
            <person name="Hunkapiller M.W."/>
            <person name="Myers E.W."/>
            <person name="Venter J.C."/>
        </authorList>
    </citation>
    <scope>NUCLEOTIDE SEQUENCE [LARGE SCALE GENOMIC DNA]</scope>
</reference>
<reference key="6">
    <citation type="journal article" date="2004" name="Genome Res.">
        <title>The status, quality, and expansion of the NIH full-length cDNA project: the Mammalian Gene Collection (MGC).</title>
        <authorList>
            <consortium name="The MGC Project Team"/>
        </authorList>
    </citation>
    <scope>NUCLEOTIDE SEQUENCE [LARGE SCALE MRNA]</scope>
    <source>
        <tissue>Brain</tissue>
        <tissue>Ovary</tissue>
    </source>
</reference>
<reference key="7">
    <citation type="journal article" date="2013" name="MBio">
        <title>ACBD3 interaction with TBC1 domain 22 protein is differentially affected by enteroviral and kobuviral 3A protein binding.</title>
        <authorList>
            <person name="Greninger A.L."/>
            <person name="Knudsen G.M."/>
            <person name="Betegon M."/>
            <person name="Burlingame A.L."/>
            <person name="DeRisi J.L."/>
        </authorList>
    </citation>
    <scope>PROTEIN SEQUENCE OF 1-188; 231-406 AND 467-528</scope>
    <scope>CLEAVAGE OF INITIATOR METHIONINE</scope>
    <scope>ACETYLATION AT ALA-2</scope>
    <scope>PHOSPHORYLATION</scope>
    <scope>INTERACTION WITH PI4KB</scope>
    <scope>INTERACTION WITH TBC1D22A</scope>
    <scope>INTERACTION WITH TBC1D22B</scope>
    <scope>MUTAGENESIS OF LYS-243; GLN-244; GLN-245; ILE-246; GLN-253; THR-254; 256-VAL--PHE-258; GLN-257; PHE-258; GLN-259; GLN-260; TYR-261; 264-GLN--TYR-266; 267-PRO--ASN-269; ILE-275; LEU-276; 282-GLU--TYR-285; HIS-284; TYR-285; GLN-286; GLN-287; TYR-288; 344-SER-SER-345; 414-SER--LEU-416; 417-PHE--PHE-420; 433-PHE--TRP-435; 494-GLY--HIS-496; SER-511 AND 511-SER--SER-513</scope>
    <scope>MASS SPECTROMETRY</scope>
    <scope>INTERACTION WITH HEPATITIS A VIRUS PROTEIN 3A (MICROBIAL INFECTION)</scope>
    <scope>INTERACTION WITH HUMAN PARECHOVIRUS 1 PROTEIN 3A (MICROBIAL INFECTION)</scope>
    <scope>INTERACTION WITH HUMAN KLASSEVIRUS PROTEIN 3A (MICROBIAL INFECTION)</scope>
    <scope>INTERACTION WITH AICHI VIRUS PROTEIN 3A</scope>
    <scope>INTERACTION WITH POLIOVIRUS PROTEIN 3A</scope>
    <scope>DOMAIN</scope>
    <scope>SUBUNIT</scope>
</reference>
<reference key="8">
    <citation type="journal article" date="2003" name="Nat. Biotechnol.">
        <title>Exploring proteomes and analyzing protein processing by mass spectrometric identification of sorted N-terminal peptides.</title>
        <authorList>
            <person name="Gevaert K."/>
            <person name="Goethals M."/>
            <person name="Martens L."/>
            <person name="Van Damme J."/>
            <person name="Staes A."/>
            <person name="Thomas G.R."/>
            <person name="Vandekerckhove J."/>
        </authorList>
    </citation>
    <scope>PROTEIN SEQUENCE OF 2-9</scope>
    <scope>CLEAVAGE OF INITIATOR METHIONINE</scope>
    <source>
        <tissue>Platelet</tissue>
    </source>
</reference>
<reference key="9">
    <citation type="journal article" date="2008" name="Mol. Cell">
        <title>Kinase-selective enrichment enables quantitative phosphoproteomics of the kinome across the cell cycle.</title>
        <authorList>
            <person name="Daub H."/>
            <person name="Olsen J.V."/>
            <person name="Bairlein M."/>
            <person name="Gnad F."/>
            <person name="Oppermann F.S."/>
            <person name="Korner R."/>
            <person name="Greff Z."/>
            <person name="Keri G."/>
            <person name="Stemmann O."/>
            <person name="Mann M."/>
        </authorList>
    </citation>
    <scope>PHOSPHORYLATION [LARGE SCALE ANALYSIS] AT SER-43</scope>
    <scope>IDENTIFICATION BY MASS SPECTROMETRY [LARGE SCALE ANALYSIS]</scope>
    <source>
        <tissue>Cervix carcinoma</tissue>
    </source>
</reference>
<reference key="10">
    <citation type="journal article" date="2009" name="Sci. Signal.">
        <title>Quantitative phosphoproteomic analysis of T cell receptor signaling reveals system-wide modulation of protein-protein interactions.</title>
        <authorList>
            <person name="Mayya V."/>
            <person name="Lundgren D.H."/>
            <person name="Hwang S.-I."/>
            <person name="Rezaul K."/>
            <person name="Wu L."/>
            <person name="Eng J.K."/>
            <person name="Rodionov V."/>
            <person name="Han D.K."/>
        </authorList>
    </citation>
    <scope>IDENTIFICATION BY MASS SPECTROMETRY [LARGE SCALE ANALYSIS]</scope>
    <source>
        <tissue>Leukemic T-cell</tissue>
    </source>
</reference>
<reference key="11">
    <citation type="journal article" date="2010" name="Sci. Signal.">
        <title>Quantitative phosphoproteomics reveals widespread full phosphorylation site occupancy during mitosis.</title>
        <authorList>
            <person name="Olsen J.V."/>
            <person name="Vermeulen M."/>
            <person name="Santamaria A."/>
            <person name="Kumar C."/>
            <person name="Miller M.L."/>
            <person name="Jensen L.J."/>
            <person name="Gnad F."/>
            <person name="Cox J."/>
            <person name="Jensen T.S."/>
            <person name="Nigg E.A."/>
            <person name="Brunak S."/>
            <person name="Mann M."/>
        </authorList>
    </citation>
    <scope>PHOSPHORYLATION [LARGE SCALE ANALYSIS] AT SER-13 AND SER-20</scope>
    <scope>IDENTIFICATION BY MASS SPECTROMETRY [LARGE SCALE ANALYSIS]</scope>
    <source>
        <tissue>Cervix carcinoma</tissue>
    </source>
</reference>
<reference key="12">
    <citation type="journal article" date="2011" name="BMC Syst. Biol.">
        <title>Initial characterization of the human central proteome.</title>
        <authorList>
            <person name="Burkard T.R."/>
            <person name="Planyavsky M."/>
            <person name="Kaupe I."/>
            <person name="Breitwieser F.P."/>
            <person name="Buerckstuemmer T."/>
            <person name="Bennett K.L."/>
            <person name="Superti-Furga G."/>
            <person name="Colinge J."/>
        </authorList>
    </citation>
    <scope>IDENTIFICATION BY MASS SPECTROMETRY [LARGE SCALE ANALYSIS]</scope>
</reference>
<reference key="13">
    <citation type="journal article" date="2012" name="EMBO J.">
        <title>ACBD3-mediated recruitment of PI4KB to picornavirus RNA replication sites.</title>
        <authorList>
            <person name="Sasaki J."/>
            <person name="Ishikawa K."/>
            <person name="Arita M."/>
            <person name="Taniguchi K."/>
        </authorList>
    </citation>
    <scope>FUNCTION (MICROBIAL INFECTION)</scope>
    <scope>INTERACTION WITH AICHI VIRUS PROTEIN 3A (MICROBIAL INFECTION)</scope>
    <scope>INTERACTION WITH AICHI VIRUS PROTEIN 2B (MICROBIAL INFECTION)</scope>
    <scope>INTERACTION WITH AICHI VIRUS PROTEIN 2C (MICROBIAL INFECTION)</scope>
    <scope>INTERACTION WITH PI4KB</scope>
    <scope>SUBCELLULAR LOCATION</scope>
    <scope>IDENTIFICATION IN A COMPLEX AICHI VIRUS PROTEIN 3A/ACBD3/PI4KB (MICROBIAL INFECTION)</scope>
</reference>
<reference key="14">
    <citation type="journal article" date="2012" name="J. Virol.">
        <title>The 3A protein from multiple picornaviruses utilizes the golgi adaptor protein ACBD3 to recruit PI4KIIIbeta.</title>
        <authorList>
            <person name="Greninger A.L."/>
            <person name="Knudsen G.M."/>
            <person name="Betegon M."/>
            <person name="Burlingame A.L."/>
            <person name="Derisi J.L."/>
        </authorList>
    </citation>
    <scope>FUNCTION (MICROBIAL INFECTION)</scope>
    <scope>INTERACTION WITH AICHI VIRUS PROTEIN 3A (MICROBIAL INFECTION)</scope>
    <scope>INTERACTION WITH POLIOVIRUS VIRUS PROTEIN 3A (MICROBIAL INFECTION)</scope>
    <scope>INTERACTION WITH HRV14 PROTEIN 3A (MICROBIAL INFECTION)</scope>
    <scope>INTERACTION WITH COXSACKIEVIRUS B2 PROTEIN 3A (MICROBIAL INFECTION)</scope>
    <scope>INTERACTION WITH COXSACKIEVIRUS B3 PROTEIN 3A (MICROBIAL INFECTION)</scope>
    <scope>INTERACTION WITH COXSACKIEVIRUS B5 PROTEIN 3A (MICROBIAL INFECTION)</scope>
    <scope>INTERACTION WITH PI4KB</scope>
    <scope>IDENTIFICATION IN A COMPLEX AICHI VIRUS PROTEIN 3A/ACBD3/PI4KB (MICROBIAL INFECTION)</scope>
</reference>
<reference key="15">
    <citation type="journal article" date="2012" name="Mol. Cell. Proteomics">
        <title>Comparative large-scale characterisation of plant vs. mammal proteins reveals similar and idiosyncratic N-alpha acetylation features.</title>
        <authorList>
            <person name="Bienvenut W.V."/>
            <person name="Sumpton D."/>
            <person name="Martinez A."/>
            <person name="Lilla S."/>
            <person name="Espagne C."/>
            <person name="Meinnel T."/>
            <person name="Giglione C."/>
        </authorList>
    </citation>
    <scope>ACETYLATION [LARGE SCALE ANALYSIS] AT ALA-2</scope>
    <scope>CLEAVAGE OF INITIATOR METHIONINE [LARGE SCALE ANALYSIS]</scope>
    <scope>IDENTIFICATION BY MASS SPECTROMETRY [LARGE SCALE ANALYSIS]</scope>
</reference>
<reference key="16">
    <citation type="journal article" date="2012" name="Proc. Natl. Acad. Sci. U.S.A.">
        <title>N-terminal acetylome analyses and functional insights of the N-terminal acetyltransferase NatB.</title>
        <authorList>
            <person name="Van Damme P."/>
            <person name="Lasa M."/>
            <person name="Polevoda B."/>
            <person name="Gazquez C."/>
            <person name="Elosegui-Artola A."/>
            <person name="Kim D.S."/>
            <person name="De Juan-Pardo E."/>
            <person name="Demeyer K."/>
            <person name="Hole K."/>
            <person name="Larrea E."/>
            <person name="Timmerman E."/>
            <person name="Prieto J."/>
            <person name="Arnesen T."/>
            <person name="Sherman F."/>
            <person name="Gevaert K."/>
            <person name="Aldabe R."/>
        </authorList>
    </citation>
    <scope>ACETYLATION [LARGE SCALE ANALYSIS] AT ALA-2</scope>
    <scope>CLEAVAGE OF INITIATOR METHIONINE [LARGE SCALE ANALYSIS]</scope>
    <scope>IDENTIFICATION BY MASS SPECTROMETRY [LARGE SCALE ANALYSIS]</scope>
</reference>
<reference key="17">
    <citation type="journal article" date="2013" name="J. Proteome Res.">
        <title>Toward a comprehensive characterization of a human cancer cell phosphoproteome.</title>
        <authorList>
            <person name="Zhou H."/>
            <person name="Di Palma S."/>
            <person name="Preisinger C."/>
            <person name="Peng M."/>
            <person name="Polat A.N."/>
            <person name="Heck A.J."/>
            <person name="Mohammed S."/>
        </authorList>
    </citation>
    <scope>IDENTIFICATION BY MASS SPECTROMETRY [LARGE SCALE ANALYSIS]</scope>
    <source>
        <tissue>Cervix carcinoma</tissue>
        <tissue>Erythroleukemia</tissue>
    </source>
</reference>
<reference key="18">
    <citation type="journal article" date="2014" name="J. Proteomics">
        <title>An enzyme assisted RP-RPLC approach for in-depth analysis of human liver phosphoproteome.</title>
        <authorList>
            <person name="Bian Y."/>
            <person name="Song C."/>
            <person name="Cheng K."/>
            <person name="Dong M."/>
            <person name="Wang F."/>
            <person name="Huang J."/>
            <person name="Sun D."/>
            <person name="Wang L."/>
            <person name="Ye M."/>
            <person name="Zou H."/>
        </authorList>
    </citation>
    <scope>PHOSPHORYLATION [LARGE SCALE ANALYSIS] AT THR-18; SER-43 AND SER-47</scope>
    <scope>IDENTIFICATION BY MASS SPECTROMETRY [LARGE SCALE ANALYSIS]</scope>
    <source>
        <tissue>Liver</tissue>
    </source>
</reference>
<reference key="19">
    <citation type="journal article" date="2019" name="MBio">
        <title>ACBD3 is an essential pan-enterovirus host factor that mediates the interaction between viral 3A protein and cellular protein PI4KB.</title>
        <authorList>
            <person name="Lyoo H."/>
            <person name="van der Schaar H.M."/>
            <person name="Dorobantu C.M."/>
            <person name="Rabouw H.H."/>
            <person name="Strating J.R.P.M."/>
            <person name="van Kuppeveld F.J.M."/>
        </authorList>
    </citation>
    <scope>IDENTIFICATION IN A COMPLEX AICHI VIRUS PROTEIN 3A/ACBD3/PI4KB (MICROBIAL INFECTION)</scope>
    <scope>SUBCELLULAR LOCATION</scope>
</reference>
<reference evidence="22 23" key="20">
    <citation type="journal article" date="2016" name="Sci. Rep.">
        <title>Structural insights and in vitro reconstitution of membrane targeting and activation of human PI4KB by the ACBD3 protein.</title>
        <authorList>
            <person name="Klima M."/>
            <person name="Toth D.J."/>
            <person name="Hexnerova R."/>
            <person name="Baumlova A."/>
            <person name="Chalupska D."/>
            <person name="Tykvart J."/>
            <person name="Rezabkova L."/>
            <person name="Sengupta N."/>
            <person name="Man P."/>
            <person name="Dubankova A."/>
            <person name="Humpolickova J."/>
            <person name="Nencka R."/>
            <person name="Veverka V."/>
            <person name="Balla T."/>
            <person name="Boura E."/>
        </authorList>
    </citation>
    <scope>STRUCTURE BY NMR OF 241-308 IN COMPLEX WITH PI4KB</scope>
    <scope>FUNCTION</scope>
    <scope>INTERACTION WITH PI4KB</scope>
    <scope>SUBCELLULAR LOCATION</scope>
    <scope>MUTAGENESIS OF PHE-258; TYR-266; HIS-284; TYR-285 AND TYR-288</scope>
</reference>
<reference evidence="27" key="21">
    <citation type="journal article" date="2017" name="Structure">
        <title>The molecular basis of Aichi virus 3A protein activation of phosphatidylinositol 4 kinase IIIbeta, PI4KB, through ACBD3.</title>
        <authorList>
            <person name="McPhail J.A."/>
            <person name="Ottosen E.H."/>
            <person name="Jenkins M.L."/>
            <person name="Burke J.E."/>
        </authorList>
    </citation>
    <scope>X-RAY CRYSTALLOGRAPHY (2.49 ANGSTROMS) OF 367-528</scope>
    <scope>FUNCTION (MICROBIAL INFECTION)</scope>
    <scope>INTERACTION WITH PI4KB</scope>
    <scope>INTERACTION WITH AICHI VIRUS 3A PROTEIN (MICROBIAL INFECTION)</scope>
    <scope>MUTAGENESIS OF 258-PHE-GLN-259; 380-ILE-LYS-381 AND TYR-525</scope>
    <scope>IDENTIFICATION IN A COMPLEX AICHI VIRUS PROTEIN 3A/ACBD3/PI4KB (MICROBIAL INFECTION)</scope>
    <scope>DOMAIN (MICROBIAL INFECTION)</scope>
</reference>
<reference evidence="24 25 26" key="22">
    <citation type="journal article" date="2017" name="Structure">
        <title>Kobuviral Non-structural 3A Proteins Act as Molecular Harnesses to Hijack the Host ACBD3 Protein.</title>
        <authorList>
            <person name="Klima M."/>
            <person name="Chalupska D."/>
            <person name="Rozycki B."/>
            <person name="Humpolickova J."/>
            <person name="Rezabkova L."/>
            <person name="Silhan J."/>
            <person name="Baumlova A."/>
            <person name="Dubankova A."/>
            <person name="Boura E."/>
        </authorList>
    </citation>
    <scope>X-RAY CRYSTALLOGRAPHY (2.00 ANGSTROMS) OF 364-528</scope>
    <scope>INTERACTION WITH AICHI VIRUS PROTEIN 3A (MICROBIAL INFECTION)</scope>
</reference>
<reference evidence="28 29 30 31 32 33" key="23">
    <citation type="journal article" date="2019" name="PLoS Pathog.">
        <title>Convergent evolution in the mechanisms of ACBD3 recruitment to picornavirus replication sites.</title>
        <authorList>
            <person name="Horova V."/>
            <person name="Lyoo H."/>
            <person name="Rozycki B."/>
            <person name="Chalupska D."/>
            <person name="Smola M."/>
            <person name="Humpolickova J."/>
            <person name="Strating J.R.P.M."/>
            <person name="van Kuppeveld F.J.M."/>
            <person name="Boura E."/>
            <person name="Klima M."/>
        </authorList>
    </citation>
    <scope>X-RAY CRYSTALLOGRAPHY (2.10 ANGSTROMS) OF 364-528</scope>
    <scope>MUTAGENESIS OF 514-LEU--ARG-516</scope>
    <scope>SUBCELLULAR LOCATION</scope>
    <scope>INTERACTION WITH POLIOVIRUS PROTEIN 3A</scope>
    <scope>INTERACTION WITH ENTEROVIRUS A71 PROTEIN 3A</scope>
    <scope>INTERACTION WITH ENTEROVIRUS D68 PROTEIN 3A</scope>
    <scope>INTERACTION WITH RHINOVIRUS B14 PROTEIN 3A</scope>
    <scope>INTERACTION WITH COXSACKIEVIRUS B3 PROTEIN 3A</scope>
    <scope>MUTAGENESIS OF 375-TRP--ARG-377; 403-VAL--VAL-407; 414-SER--PHE-417 AND 523-ARG--THR-527</scope>
</reference>
<feature type="chain" id="PRO_0000436449" description="Golgi resident protein GCP60">
    <location>
        <begin position="1"/>
        <end position="528"/>
    </location>
</feature>
<feature type="initiator methionine" description="Removed; alternate" evidence="8 36 37">
    <location>
        <position position="1"/>
    </location>
</feature>
<feature type="chain" id="PRO_0000214029" description="Golgi resident protein GCP60, N-terminally processed">
    <location>
        <begin position="2"/>
        <end position="528"/>
    </location>
</feature>
<feature type="domain" description="ACB" evidence="5">
    <location>
        <begin position="83"/>
        <end position="174"/>
    </location>
</feature>
<feature type="domain" description="GOLD" evidence="4">
    <location>
        <begin position="384"/>
        <end position="526"/>
    </location>
</feature>
<feature type="region of interest" description="Disordered" evidence="6">
    <location>
        <begin position="1"/>
        <end position="71"/>
    </location>
</feature>
<feature type="region of interest" description="Charged amino-acid region (CAR)" evidence="12">
    <location>
        <begin position="182"/>
        <end position="240"/>
    </location>
</feature>
<feature type="region of interest" description="Disordered" evidence="6">
    <location>
        <begin position="182"/>
        <end position="230"/>
    </location>
</feature>
<feature type="region of interest" description="Q domain; Interaction with PI4KB, TBC1D22A and TBC1D22B" evidence="12 13">
    <location>
        <begin position="241"/>
        <end position="308"/>
    </location>
</feature>
<feature type="region of interest" description="Disordered" evidence="6">
    <location>
        <begin position="335"/>
        <end position="362"/>
    </location>
</feature>
<feature type="region of interest" description="Membrane-binding" evidence="15 17">
    <location>
        <begin position="514"/>
        <end position="516"/>
    </location>
</feature>
<feature type="coiled-coil region" evidence="3">
    <location>
        <begin position="174"/>
        <end position="257"/>
    </location>
</feature>
<feature type="compositionally biased region" description="Pro residues" evidence="6">
    <location>
        <begin position="34"/>
        <end position="45"/>
    </location>
</feature>
<feature type="compositionally biased region" description="Low complexity" evidence="6">
    <location>
        <begin position="54"/>
        <end position="69"/>
    </location>
</feature>
<feature type="compositionally biased region" description="Basic and acidic residues" evidence="6">
    <location>
        <begin position="340"/>
        <end position="350"/>
    </location>
</feature>
<feature type="site" description="Membrane-binding" evidence="15 17">
    <location>
        <position position="399"/>
    </location>
</feature>
<feature type="modified residue" description="N-acetylalanine; in Golgi resident protein GCP60, N-terminally processed" evidence="36 37">
    <location>
        <position position="2"/>
    </location>
</feature>
<feature type="modified residue" description="Phosphoserine" evidence="35">
    <location>
        <position position="13"/>
    </location>
</feature>
<feature type="modified residue" description="Phosphothreonine" evidence="38">
    <location>
        <position position="18"/>
    </location>
</feature>
<feature type="modified residue" description="Phosphoserine" evidence="35">
    <location>
        <position position="20"/>
    </location>
</feature>
<feature type="modified residue" description="Phosphoserine" evidence="34 38">
    <location>
        <position position="43"/>
    </location>
</feature>
<feature type="modified residue" description="Phosphoserine" evidence="38">
    <location>
        <position position="47"/>
    </location>
</feature>
<feature type="sequence variant" id="VAR_019615" description="In dbSNP:rs2306120." evidence="9 18">
    <original>E</original>
    <variation>D</variation>
    <location>
        <position position="187"/>
    </location>
</feature>
<feature type="mutagenesis site" description="No effect on PI4KB- and TBC1D22B-binding." evidence="12">
    <original>K</original>
    <variation>A</variation>
    <location>
        <position position="243"/>
    </location>
</feature>
<feature type="mutagenesis site" description="No effect on PI4KB- and TBC1D22B-binding." evidence="12">
    <original>Q</original>
    <variation>A</variation>
    <location>
        <position position="244"/>
    </location>
</feature>
<feature type="mutagenesis site" description="No effect on PI4KB- and TBC1D22B-binding." evidence="12">
    <original>Q</original>
    <variation>A</variation>
    <location>
        <position position="245"/>
    </location>
</feature>
<feature type="mutagenesis site" description="Partial loss of PI4KB- and TBC1D22B-binding." evidence="12">
    <original>I</original>
    <variation>A</variation>
    <location>
        <position position="246"/>
    </location>
</feature>
<feature type="mutagenesis site" description="No effect on PI4KB- and TBC1D22B-binding." evidence="12">
    <original>Q</original>
    <variation>A</variation>
    <location>
        <position position="253"/>
    </location>
</feature>
<feature type="mutagenesis site" description="No effect on PI4KB- and TBC1D22B-binding." evidence="12">
    <original>T</original>
    <variation>A</variation>
    <location>
        <position position="254"/>
    </location>
</feature>
<feature type="mutagenesis site" description="Loss of PI4KB-, TBC1D22A- and TBC1D22B-binding." evidence="12">
    <original>VQF</original>
    <variation>AAA</variation>
    <location>
        <begin position="256"/>
        <end position="258"/>
    </location>
</feature>
<feature type="mutagenesis site" description="Partial loss of PI4KB- and TBC1D22B-binding." evidence="12">
    <original>Q</original>
    <variation>A</variation>
    <location>
        <position position="257"/>
    </location>
</feature>
<feature type="mutagenesis site" description="Complete loss of interaction with PI4KB." evidence="14">
    <original>FQ</original>
    <variation>AA</variation>
    <location>
        <begin position="258"/>
        <end position="259"/>
    </location>
</feature>
<feature type="mutagenesis site" description="Loss of interaction with PI4KB." evidence="14">
    <original>FQ</original>
    <variation>AA</variation>
    <location>
        <begin position="258"/>
        <end position="259"/>
    </location>
</feature>
<feature type="mutagenesis site" description="Differential effect on PI4KB- and TBC1D22B-binding, with PI4KB-binding being much more affected than TBC1D22B-binding." evidence="12 13">
    <original>F</original>
    <variation>A</variation>
    <location>
        <position position="258"/>
    </location>
</feature>
<feature type="mutagenesis site" description="No effect on PI4KB- and TBC1D22B-binding." evidence="12">
    <original>Q</original>
    <variation>A</variation>
    <location>
        <position position="259"/>
    </location>
</feature>
<feature type="mutagenesis site" description="No effect on PI4KB- and TBC1D22B-binding." evidence="12">
    <original>Q</original>
    <variation>A</variation>
    <location>
        <position position="260"/>
    </location>
</feature>
<feature type="mutagenesis site" description="No effect on PI4KB- and TBC1D22B-binding." evidence="12">
    <original>Y</original>
    <variation>A</variation>
    <location>
        <position position="261"/>
    </location>
</feature>
<feature type="mutagenesis site" description="No effect on PI4KB-, TBC1D22A- and TBC1D22B-binding." evidence="12">
    <original>QQY</original>
    <variation>AAA</variation>
    <location>
        <begin position="264"/>
        <end position="266"/>
    </location>
</feature>
<feature type="mutagenesis site" description="No loss of interaction with PI4KB." evidence="13">
    <original>Y</original>
    <variation>A</variation>
    <location>
        <position position="266"/>
    </location>
</feature>
<feature type="mutagenesis site" description="Loss of PI4KB-, TBC1D22A- and TBC1D22B-binding." evidence="12">
    <original>PGN</original>
    <variation>AAA</variation>
    <location>
        <begin position="267"/>
        <end position="269"/>
    </location>
</feature>
<feature type="mutagenesis site" description="No effect on PI4KB- and TBC1D22B-binding." evidence="12">
    <original>I</original>
    <variation>A</variation>
    <location>
        <position position="275"/>
    </location>
</feature>
<feature type="mutagenesis site" description="No effect on PI4KB- and TBC1D22B-binding." evidence="12">
    <original>L</original>
    <variation>A</variation>
    <location>
        <position position="276"/>
    </location>
</feature>
<feature type="mutagenesis site" description="Loss of PI4KB-, TBC1D22A- and TBC1D22B-binding." evidence="12">
    <original>EQHY</original>
    <variation>AAAA</variation>
    <location>
        <begin position="282"/>
        <end position="285"/>
    </location>
</feature>
<feature type="mutagenesis site" description="Almost complete loss of PI4KB- and TBC1D22B-binding." evidence="12 13">
    <original>H</original>
    <variation>A</variation>
    <location>
        <position position="284"/>
    </location>
</feature>
<feature type="mutagenesis site" description="Differential loss of PI4KB- and TBC1D22B-binding, with PI4KB-binding being much more affected than TBC1D22B-binding." evidence="12 13">
    <original>Y</original>
    <variation>A</variation>
    <location>
        <position position="285"/>
    </location>
</feature>
<feature type="mutagenesis site" description="No effect on PI4KB- and TBC1D22B-binding." evidence="12">
    <original>Q</original>
    <variation>A</variation>
    <location>
        <position position="286"/>
    </location>
</feature>
<feature type="mutagenesis site" description="No effect on PI4KB- and TBC1D22B-binding." evidence="12">
    <original>Q</original>
    <variation>A</variation>
    <location>
        <position position="287"/>
    </location>
</feature>
<feature type="mutagenesis site" description="Almost complete loss of PI4KB- and TBC1D22B-binding." evidence="12 13">
    <original>Y</original>
    <variation>A</variation>
    <location>
        <position position="288"/>
    </location>
</feature>
<feature type="mutagenesis site" description="No effect on PI4KB-, TBC1D22A- and TBC1D22B-binding." evidence="12">
    <original>SS</original>
    <variation>AA</variation>
    <location>
        <begin position="344"/>
        <end position="345"/>
    </location>
</feature>
<feature type="mutagenesis site" description="80% reduced ability to interact with the 3A protein of enterovirus D68." evidence="17">
    <original>WTR</original>
    <variation>ATA</variation>
    <location>
        <begin position="375"/>
        <end position="377"/>
    </location>
</feature>
<feature type="mutagenesis site" description="No effect on interaction with PI4KB but loss of interaction with Kobuviral (Aichi) 3A protein. Loss of ability to sensitize PI4KB activation by Kobuviral (Aichi) 3A protein." evidence="14">
    <original>IK</original>
    <variation>AE</variation>
    <location>
        <begin position="380"/>
        <end position="381"/>
    </location>
</feature>
<feature type="mutagenesis site" description="95% reduced ability to interact with the 3A protein of enterovirus D68." evidence="17">
    <original>VTVRV</original>
    <variation>AAAAA</variation>
    <location>
        <begin position="403"/>
        <end position="407"/>
    </location>
</feature>
<feature type="mutagenesis site" description="60% reduced ability to interact with the 3A protein of enterovirus D68." evidence="17">
    <original>SYLF</original>
    <variation>AAAA</variation>
    <location>
        <begin position="414"/>
        <end position="417"/>
    </location>
</feature>
<feature type="mutagenesis site" description="No effect on PI4KB-, TBC1D22A- and TBC1D22B-binding." evidence="12">
    <original>SYL</original>
    <variation>AAA</variation>
    <location>
        <begin position="414"/>
        <end position="416"/>
    </location>
</feature>
<feature type="mutagenesis site" description="No effect on PI4KB-, TBC1D22A- and TBC1D22B-binding." evidence="12">
    <original>FWEF</original>
    <variation>AAAA</variation>
    <location>
        <begin position="417"/>
        <end position="420"/>
    </location>
</feature>
<feature type="mutagenesis site" description="No effect on PI4KB-, TBC1D22A- and TBC1D22B-binding." evidence="12">
    <original>FEW</original>
    <variation>AAA</variation>
    <location>
        <begin position="433"/>
        <end position="435"/>
    </location>
</feature>
<feature type="mutagenesis site" description="No effect on PI4KB-, TBC1D22A- and TBC1D22B-binding." evidence="12">
    <original>GSH</original>
    <variation>AAA</variation>
    <location>
        <begin position="494"/>
        <end position="496"/>
    </location>
</feature>
<feature type="mutagenesis site" description="No effect on PI4KB-, TBC1D22A- and TBC1D22B-binding." evidence="12">
    <original>SYS</original>
    <variation>AAA</variation>
    <location>
        <begin position="511"/>
        <end position="513"/>
    </location>
</feature>
<feature type="mutagenesis site" description="Partial loss of PI4KB- and TBC1D22B-binding." evidence="12">
    <original>S</original>
    <variation>A</variation>
    <location>
        <position position="511"/>
    </location>
</feature>
<feature type="mutagenesis site" description="Almost complete loss of Golgi loalization." evidence="17">
    <original>LWR</original>
    <variation>AAA</variation>
    <location>
        <begin position="514"/>
        <end position="516"/>
    </location>
</feature>
<feature type="mutagenesis site" description="75% reduced ability to interact with the 3A protein of enterovirus D68." evidence="17">
    <original>RVYYT</original>
    <variation>AAAAA</variation>
    <location>
        <begin position="523"/>
        <end position="527"/>
    </location>
</feature>
<feature type="mutagenesis site" description="No effect on interaction with PI4KB but loss of interaction with Kobuviral (Aichi) 3A protein. Loss of ability to sensitize PI4KB activation by Kobuviral (Aichi) 3A protein." evidence="14">
    <original>Y</original>
    <variation>A</variation>
    <location>
        <position position="525"/>
    </location>
</feature>
<feature type="sequence conflict" description="In Ref. 2; AAN60219." evidence="19" ref="2">
    <original>F</original>
    <variation>L</variation>
    <location>
        <position position="93"/>
    </location>
</feature>
<feature type="sequence conflict" description="In Ref. 2; AAN60219." evidence="19" ref="2">
    <original>R</original>
    <variation>I</variation>
    <location>
        <position position="230"/>
    </location>
</feature>
<feature type="sequence conflict" description="In Ref. 2; AAN60219." evidence="19" ref="2">
    <original>Q</original>
    <variation>R</variation>
    <location>
        <position position="265"/>
    </location>
</feature>
<feature type="sequence conflict" description="In Ref. 2; AAN60219." evidence="19" ref="2">
    <original>S</original>
    <variation>P</variation>
    <location>
        <position position="333"/>
    </location>
</feature>
<feature type="sequence conflict" description="In Ref. 2." evidence="19" ref="2">
    <original>KEKIQQDADSVITV</original>
    <variation>QREDSAGCRFRDYS</variation>
    <location>
        <begin position="384"/>
        <end position="397"/>
    </location>
</feature>
<feature type="sequence conflict" description="In Ref. 2; AAN60219." evidence="19" ref="2">
    <original>Y</original>
    <variation>C</variation>
    <location>
        <position position="425"/>
    </location>
</feature>
<feature type="sequence conflict" description="In Ref. 6; AAH60792." evidence="19" ref="6">
    <original>K</original>
    <variation>R</variation>
    <location>
        <position position="473"/>
    </location>
</feature>
<feature type="helix" evidence="39">
    <location>
        <begin position="243"/>
        <end position="265"/>
    </location>
</feature>
<feature type="helix" evidence="39">
    <location>
        <begin position="270"/>
        <end position="304"/>
    </location>
</feature>
<feature type="strand" evidence="40">
    <location>
        <begin position="373"/>
        <end position="378"/>
    </location>
</feature>
<feature type="helix" evidence="40">
    <location>
        <begin position="380"/>
        <end position="387"/>
    </location>
</feature>
<feature type="helix" evidence="40">
    <location>
        <begin position="391"/>
        <end position="393"/>
    </location>
</feature>
<feature type="strand" evidence="40">
    <location>
        <begin position="394"/>
        <end position="397"/>
    </location>
</feature>
<feature type="strand" evidence="40">
    <location>
        <begin position="402"/>
        <end position="408"/>
    </location>
</feature>
<feature type="strand" evidence="40">
    <location>
        <begin position="414"/>
        <end position="421"/>
    </location>
</feature>
<feature type="strand" evidence="40">
    <location>
        <begin position="423"/>
        <end position="425"/>
    </location>
</feature>
<feature type="strand" evidence="40">
    <location>
        <begin position="427"/>
        <end position="434"/>
    </location>
</feature>
<feature type="strand" evidence="40">
    <location>
        <begin position="444"/>
        <end position="448"/>
    </location>
</feature>
<feature type="strand" evidence="40">
    <location>
        <begin position="476"/>
        <end position="485"/>
    </location>
</feature>
<feature type="turn" evidence="40">
    <location>
        <begin position="487"/>
        <end position="489"/>
    </location>
</feature>
<feature type="strand" evidence="40">
    <location>
        <begin position="490"/>
        <end position="497"/>
    </location>
</feature>
<feature type="strand" evidence="40">
    <location>
        <begin position="503"/>
        <end position="509"/>
    </location>
</feature>
<feature type="strand" evidence="40">
    <location>
        <begin position="518"/>
        <end position="527"/>
    </location>
</feature>
<keyword id="KW-0002">3D-structure</keyword>
<keyword id="KW-0007">Acetylation</keyword>
<keyword id="KW-0175">Coiled coil</keyword>
<keyword id="KW-0903">Direct protein sequencing</keyword>
<keyword id="KW-0333">Golgi apparatus</keyword>
<keyword id="KW-0945">Host-virus interaction</keyword>
<keyword id="KW-0444">Lipid biosynthesis</keyword>
<keyword id="KW-0443">Lipid metabolism</keyword>
<keyword id="KW-0472">Membrane</keyword>
<keyword id="KW-0496">Mitochondrion</keyword>
<keyword id="KW-0597">Phosphoprotein</keyword>
<keyword id="KW-1267">Proteomics identification</keyword>
<keyword id="KW-1185">Reference proteome</keyword>
<keyword id="KW-0752">Steroid biosynthesis</keyword>
<dbReference type="EMBL" id="AB043587">
    <property type="protein sequence ID" value="BAB20592.2"/>
    <property type="molecule type" value="mRNA"/>
</dbReference>
<dbReference type="EMBL" id="AY150218">
    <property type="protein sequence ID" value="AAN60219.1"/>
    <property type="molecule type" value="mRNA"/>
</dbReference>
<dbReference type="EMBL" id="AK025520">
    <property type="protein sequence ID" value="BAB15159.1"/>
    <property type="molecule type" value="mRNA"/>
</dbReference>
<dbReference type="EMBL" id="AK314468">
    <property type="protein sequence ID" value="BAG37076.1"/>
    <property type="molecule type" value="mRNA"/>
</dbReference>
<dbReference type="EMBL" id="AL592045">
    <property type="status" value="NOT_ANNOTATED_CDS"/>
    <property type="molecule type" value="Genomic_DNA"/>
</dbReference>
<dbReference type="EMBL" id="CH471098">
    <property type="protein sequence ID" value="EAW69775.1"/>
    <property type="molecule type" value="Genomic_DNA"/>
</dbReference>
<dbReference type="EMBL" id="BC034563">
    <property type="protein sequence ID" value="AAH34563.2"/>
    <property type="molecule type" value="mRNA"/>
</dbReference>
<dbReference type="EMBL" id="BC045533">
    <property type="protein sequence ID" value="AAH45533.1"/>
    <property type="molecule type" value="mRNA"/>
</dbReference>
<dbReference type="EMBL" id="BC060792">
    <property type="protein sequence ID" value="AAH60792.1"/>
    <property type="molecule type" value="mRNA"/>
</dbReference>
<dbReference type="CCDS" id="CCDS1551.1"/>
<dbReference type="RefSeq" id="NP_073572.2">
    <property type="nucleotide sequence ID" value="NM_022735.3"/>
</dbReference>
<dbReference type="PDB" id="2N72">
    <property type="method" value="NMR"/>
    <property type="chains" value="A=241-308"/>
</dbReference>
<dbReference type="PDB" id="2N73">
    <property type="method" value="NMR"/>
    <property type="chains" value="A=241-308"/>
</dbReference>
<dbReference type="PDB" id="5LZ1">
    <property type="method" value="X-ray"/>
    <property type="resolution" value="2.00 A"/>
    <property type="chains" value="A=364-528"/>
</dbReference>
<dbReference type="PDB" id="5LZ3">
    <property type="method" value="X-ray"/>
    <property type="resolution" value="3.00 A"/>
    <property type="chains" value="A=364-528"/>
</dbReference>
<dbReference type="PDB" id="5LZ6">
    <property type="method" value="X-ray"/>
    <property type="resolution" value="2.60 A"/>
    <property type="chains" value="A=364-528"/>
</dbReference>
<dbReference type="PDB" id="5TDQ">
    <property type="method" value="X-ray"/>
    <property type="resolution" value="2.49 A"/>
    <property type="chains" value="A=367-528"/>
</dbReference>
<dbReference type="PDB" id="6HLN">
    <property type="method" value="X-ray"/>
    <property type="resolution" value="2.10 A"/>
    <property type="chains" value="A=364-528"/>
</dbReference>
<dbReference type="PDB" id="6HLT">
    <property type="method" value="X-ray"/>
    <property type="resolution" value="2.81 A"/>
    <property type="chains" value="A/C=364-528"/>
</dbReference>
<dbReference type="PDB" id="6HLV">
    <property type="method" value="X-ray"/>
    <property type="resolution" value="2.50 A"/>
    <property type="chains" value="A=364-528"/>
</dbReference>
<dbReference type="PDB" id="6HLW">
    <property type="method" value="X-ray"/>
    <property type="resolution" value="2.73 A"/>
    <property type="chains" value="A/C=364-528"/>
</dbReference>
<dbReference type="PDB" id="6HM8">
    <property type="method" value="X-ray"/>
    <property type="resolution" value="2.28 A"/>
    <property type="chains" value="A=364-528"/>
</dbReference>
<dbReference type="PDB" id="6HMV">
    <property type="method" value="X-ray"/>
    <property type="resolution" value="2.24 A"/>
    <property type="chains" value="A=364-528"/>
</dbReference>
<dbReference type="PDBsum" id="2N72"/>
<dbReference type="PDBsum" id="2N73"/>
<dbReference type="PDBsum" id="5LZ1"/>
<dbReference type="PDBsum" id="5LZ3"/>
<dbReference type="PDBsum" id="5LZ6"/>
<dbReference type="PDBsum" id="5TDQ"/>
<dbReference type="PDBsum" id="6HLN"/>
<dbReference type="PDBsum" id="6HLT"/>
<dbReference type="PDBsum" id="6HLV"/>
<dbReference type="PDBsum" id="6HLW"/>
<dbReference type="PDBsum" id="6HM8"/>
<dbReference type="PDBsum" id="6HMV"/>
<dbReference type="SMR" id="Q9H3P7"/>
<dbReference type="BioGRID" id="122262">
    <property type="interactions" value="263"/>
</dbReference>
<dbReference type="DIP" id="DIP-40673N"/>
<dbReference type="FunCoup" id="Q9H3P7">
    <property type="interactions" value="3612"/>
</dbReference>
<dbReference type="IntAct" id="Q9H3P7">
    <property type="interactions" value="101"/>
</dbReference>
<dbReference type="MINT" id="Q9H3P7"/>
<dbReference type="STRING" id="9606.ENSP00000355777"/>
<dbReference type="TCDB" id="9.B.17.2.3">
    <property type="family name" value="the vamp-associated protein (vap) family"/>
</dbReference>
<dbReference type="GlyGen" id="Q9H3P7">
    <property type="glycosylation" value="1 site, 1 O-linked glycan (1 site)"/>
</dbReference>
<dbReference type="iPTMnet" id="Q9H3P7"/>
<dbReference type="MetOSite" id="Q9H3P7"/>
<dbReference type="PhosphoSitePlus" id="Q9H3P7"/>
<dbReference type="SwissPalm" id="Q9H3P7"/>
<dbReference type="BioMuta" id="ACBD3"/>
<dbReference type="DMDM" id="51316096"/>
<dbReference type="jPOST" id="Q9H3P7"/>
<dbReference type="MassIVE" id="Q9H3P7"/>
<dbReference type="PaxDb" id="9606-ENSP00000355777"/>
<dbReference type="PeptideAtlas" id="Q9H3P7"/>
<dbReference type="ProteomicsDB" id="80738"/>
<dbReference type="Pumba" id="Q9H3P7"/>
<dbReference type="Antibodypedia" id="2875">
    <property type="antibodies" value="416 antibodies from 29 providers"/>
</dbReference>
<dbReference type="DNASU" id="64746"/>
<dbReference type="Ensembl" id="ENST00000366812.6">
    <property type="protein sequence ID" value="ENSP00000355777.5"/>
    <property type="gene ID" value="ENSG00000182827.9"/>
</dbReference>
<dbReference type="GeneID" id="64746"/>
<dbReference type="KEGG" id="hsa:64746"/>
<dbReference type="MANE-Select" id="ENST00000366812.6">
    <property type="protein sequence ID" value="ENSP00000355777.5"/>
    <property type="RefSeq nucleotide sequence ID" value="NM_022735.4"/>
    <property type="RefSeq protein sequence ID" value="NP_073572.2"/>
</dbReference>
<dbReference type="UCSC" id="uc001hpy.4">
    <property type="organism name" value="human"/>
</dbReference>
<dbReference type="AGR" id="HGNC:15453"/>
<dbReference type="CTD" id="64746"/>
<dbReference type="DisGeNET" id="64746"/>
<dbReference type="GeneCards" id="ACBD3"/>
<dbReference type="HGNC" id="HGNC:15453">
    <property type="gene designation" value="ACBD3"/>
</dbReference>
<dbReference type="HPA" id="ENSG00000182827">
    <property type="expression patterns" value="Low tissue specificity"/>
</dbReference>
<dbReference type="MIM" id="606809">
    <property type="type" value="gene"/>
</dbReference>
<dbReference type="neXtProt" id="NX_Q9H3P7"/>
<dbReference type="OpenTargets" id="ENSG00000182827"/>
<dbReference type="PharmGKB" id="PA28803"/>
<dbReference type="VEuPathDB" id="HostDB:ENSG00000182827"/>
<dbReference type="eggNOG" id="KOG3878">
    <property type="taxonomic scope" value="Eukaryota"/>
</dbReference>
<dbReference type="GeneTree" id="ENSGT00530000063651"/>
<dbReference type="HOGENOM" id="CLU_048443_0_0_1"/>
<dbReference type="InParanoid" id="Q9H3P7"/>
<dbReference type="OMA" id="SYSIWRS"/>
<dbReference type="OrthoDB" id="5839451at2759"/>
<dbReference type="PAN-GO" id="Q9H3P7">
    <property type="GO annotations" value="1 GO annotation based on evolutionary models"/>
</dbReference>
<dbReference type="PhylomeDB" id="Q9H3P7"/>
<dbReference type="TreeFam" id="TF321667"/>
<dbReference type="PathwayCommons" id="Q9H3P7"/>
<dbReference type="Reactome" id="R-HSA-432722">
    <property type="pathway name" value="Golgi Associated Vesicle Biogenesis"/>
</dbReference>
<dbReference type="SignaLink" id="Q9H3P7"/>
<dbReference type="BioGRID-ORCS" id="64746">
    <property type="hits" value="23 hits in 1164 CRISPR screens"/>
</dbReference>
<dbReference type="ChiTaRS" id="ACBD3">
    <property type="organism name" value="human"/>
</dbReference>
<dbReference type="GeneWiki" id="ACBD3"/>
<dbReference type="GenomeRNAi" id="64746"/>
<dbReference type="Pharos" id="Q9H3P7">
    <property type="development level" value="Tbio"/>
</dbReference>
<dbReference type="PRO" id="PR:Q9H3P7"/>
<dbReference type="Proteomes" id="UP000005640">
    <property type="component" value="Chromosome 1"/>
</dbReference>
<dbReference type="RNAct" id="Q9H3P7">
    <property type="molecule type" value="protein"/>
</dbReference>
<dbReference type="Bgee" id="ENSG00000182827">
    <property type="expression patterns" value="Expressed in tibia and 211 other cell types or tissues"/>
</dbReference>
<dbReference type="ExpressionAtlas" id="Q9H3P7">
    <property type="expression patterns" value="baseline and differential"/>
</dbReference>
<dbReference type="GO" id="GO:0005794">
    <property type="term" value="C:Golgi apparatus"/>
    <property type="evidence" value="ECO:0000314"/>
    <property type="project" value="HPA"/>
</dbReference>
<dbReference type="GO" id="GO:0000139">
    <property type="term" value="C:Golgi membrane"/>
    <property type="evidence" value="ECO:0000314"/>
    <property type="project" value="UniProtKB"/>
</dbReference>
<dbReference type="GO" id="GO:0016020">
    <property type="term" value="C:membrane"/>
    <property type="evidence" value="ECO:0007005"/>
    <property type="project" value="UniProtKB"/>
</dbReference>
<dbReference type="GO" id="GO:0005739">
    <property type="term" value="C:mitochondrion"/>
    <property type="evidence" value="ECO:0007669"/>
    <property type="project" value="UniProtKB-SubCell"/>
</dbReference>
<dbReference type="GO" id="GO:0000062">
    <property type="term" value="F:fatty-acyl-CoA binding"/>
    <property type="evidence" value="ECO:0007669"/>
    <property type="project" value="InterPro"/>
</dbReference>
<dbReference type="GO" id="GO:0034237">
    <property type="term" value="F:protein kinase A regulatory subunit binding"/>
    <property type="evidence" value="ECO:0000353"/>
    <property type="project" value="UniProtKB"/>
</dbReference>
<dbReference type="GO" id="GO:0006694">
    <property type="term" value="P:steroid biosynthetic process"/>
    <property type="evidence" value="ECO:0007669"/>
    <property type="project" value="UniProtKB-KW"/>
</dbReference>
<dbReference type="FunFam" id="1.20.80.10:FF:000017">
    <property type="entry name" value="Golgi resident protein GCP60"/>
    <property type="match status" value="1"/>
</dbReference>
<dbReference type="FunFam" id="2.60.120.680:FF:000002">
    <property type="entry name" value="Putative Golgi resident protein GCP60"/>
    <property type="match status" value="1"/>
</dbReference>
<dbReference type="Gene3D" id="1.20.80.10">
    <property type="match status" value="1"/>
</dbReference>
<dbReference type="Gene3D" id="2.60.120.680">
    <property type="entry name" value="GOLD domain"/>
    <property type="match status" value="1"/>
</dbReference>
<dbReference type="InterPro" id="IPR022408">
    <property type="entry name" value="Acyl-CoA-binding_prot_CS"/>
</dbReference>
<dbReference type="InterPro" id="IPR000582">
    <property type="entry name" value="Acyl-CoA-binding_protein"/>
</dbReference>
<dbReference type="InterPro" id="IPR035984">
    <property type="entry name" value="Acyl-CoA-binding_sf"/>
</dbReference>
<dbReference type="InterPro" id="IPR014352">
    <property type="entry name" value="FERM/acyl-CoA-bd_prot_sf"/>
</dbReference>
<dbReference type="InterPro" id="IPR009038">
    <property type="entry name" value="GOLD_dom"/>
</dbReference>
<dbReference type="InterPro" id="IPR036598">
    <property type="entry name" value="GOLD_dom_sf"/>
</dbReference>
<dbReference type="InterPro" id="IPR052269">
    <property type="entry name" value="Golgi-PI4KB_interaction"/>
</dbReference>
<dbReference type="PANTHER" id="PTHR22973:SF11">
    <property type="entry name" value="GOLGI RESIDENT PROTEIN GCP60"/>
    <property type="match status" value="1"/>
</dbReference>
<dbReference type="PANTHER" id="PTHR22973">
    <property type="entry name" value="LD35087P"/>
    <property type="match status" value="1"/>
</dbReference>
<dbReference type="Pfam" id="PF00887">
    <property type="entry name" value="ACBP"/>
    <property type="match status" value="1"/>
</dbReference>
<dbReference type="Pfam" id="PF13897">
    <property type="entry name" value="GOLD_2"/>
    <property type="match status" value="1"/>
</dbReference>
<dbReference type="SUPFAM" id="SSF47027">
    <property type="entry name" value="Acyl-CoA binding protein"/>
    <property type="match status" value="1"/>
</dbReference>
<dbReference type="SUPFAM" id="SSF101576">
    <property type="entry name" value="Supernatant protein factor (SPF), C-terminal domain"/>
    <property type="match status" value="1"/>
</dbReference>
<dbReference type="PROSITE" id="PS00880">
    <property type="entry name" value="ACB_1"/>
    <property type="match status" value="1"/>
</dbReference>
<dbReference type="PROSITE" id="PS51228">
    <property type="entry name" value="ACB_2"/>
    <property type="match status" value="1"/>
</dbReference>
<dbReference type="PROSITE" id="PS50866">
    <property type="entry name" value="GOLD"/>
    <property type="match status" value="1"/>
</dbReference>
<sequence length="528" mass="60593">MAAVLNAERLEVSVDGLTLSPDPEERPGAEGAPLLPPPLPPPSPPGSGRGPGASGEQPEPGEAAAGGAAEEARRLEQRWGFGLEELYGLALRFFKEKDGKAFHPTYEEKLKLVALHKQVLMGPYNPDTCPEVGFFDVLGNDRRREWAALGNMSKEDAMVEFVKLLNRCCHLFSTYVASHKIEKEEQEKKRKEEEERRRREEEERERLQKEEEKRRREEEERLRREEEERRRIEEERLRLEQQKQQIMAALNSQTAVQFQQYAAQQYPGNYEQQQILIRQLQEQHYQQYMQQLYQVQLAQQQAALQKQQEVVVAGSSLPTSSKVNATVPSNMMSVNGQAKTHTDSSEKELEPEAAEEALENGPKESLPVIAAPSMWTRPQIKDFKEKIQQDADSVITVGRGEVVTVRVPTHEEGSYLFWEFATDNYDIGFGVYFEWTDSPNTAVSVHVSESSDDDEEEEENIGCEEKAKKNANKPLLDEIVPVYRRDCHEEVYAGSHQYPGRGVYLLKFDNSYSLWRSKSVYYRVYYTR</sequence>